<feature type="chain" id="PRO_0000255769" description="Bifunctional protein HldE">
    <location>
        <begin position="1"/>
        <end position="488"/>
    </location>
</feature>
<feature type="region of interest" description="Ribokinase">
    <location>
        <begin position="1"/>
        <end position="330"/>
    </location>
</feature>
<feature type="region of interest" description="Cytidylyltransferase">
    <location>
        <begin position="358"/>
        <end position="488"/>
    </location>
</feature>
<feature type="active site" evidence="1">
    <location>
        <position position="275"/>
    </location>
</feature>
<feature type="binding site" evidence="1">
    <location>
        <begin position="205"/>
        <end position="208"/>
    </location>
    <ligand>
        <name>ATP</name>
        <dbReference type="ChEBI" id="CHEBI:30616"/>
    </ligand>
</feature>
<reference key="1">
    <citation type="journal article" date="2006" name="Appl. Environ. Microbiol.">
        <title>Genome sequence of the chemolithoautotrophic nitrite-oxidizing bacterium Nitrobacter winogradskyi Nb-255.</title>
        <authorList>
            <person name="Starkenburg S.R."/>
            <person name="Chain P.S.G."/>
            <person name="Sayavedra-Soto L.A."/>
            <person name="Hauser L."/>
            <person name="Land M.L."/>
            <person name="Larimer F.W."/>
            <person name="Malfatti S.A."/>
            <person name="Klotz M.G."/>
            <person name="Bottomley P.J."/>
            <person name="Arp D.J."/>
            <person name="Hickey W.J."/>
        </authorList>
    </citation>
    <scope>NUCLEOTIDE SEQUENCE [LARGE SCALE GENOMIC DNA]</scope>
    <source>
        <strain>ATCC 25391 / DSM 10237 / CIP 104748 / NCIMB 11846 / Nb-255</strain>
    </source>
</reference>
<comment type="function">
    <text evidence="1">Catalyzes the phosphorylation of D-glycero-D-manno-heptose 7-phosphate at the C-1 position to selectively form D-glycero-beta-D-manno-heptose-1,7-bisphosphate.</text>
</comment>
<comment type="function">
    <text evidence="1">Catalyzes the ADP transfer from ATP to D-glycero-beta-D-manno-heptose 1-phosphate, yielding ADP-D-glycero-beta-D-manno-heptose.</text>
</comment>
<comment type="catalytic activity">
    <reaction evidence="1">
        <text>D-glycero-beta-D-manno-heptose 7-phosphate + ATP = D-glycero-beta-D-manno-heptose 1,7-bisphosphate + ADP + H(+)</text>
        <dbReference type="Rhea" id="RHEA:27473"/>
        <dbReference type="ChEBI" id="CHEBI:15378"/>
        <dbReference type="ChEBI" id="CHEBI:30616"/>
        <dbReference type="ChEBI" id="CHEBI:60204"/>
        <dbReference type="ChEBI" id="CHEBI:60208"/>
        <dbReference type="ChEBI" id="CHEBI:456216"/>
        <dbReference type="EC" id="2.7.1.167"/>
    </reaction>
</comment>
<comment type="catalytic activity">
    <reaction evidence="1">
        <text>D-glycero-beta-D-manno-heptose 1-phosphate + ATP + H(+) = ADP-D-glycero-beta-D-manno-heptose + diphosphate</text>
        <dbReference type="Rhea" id="RHEA:27465"/>
        <dbReference type="ChEBI" id="CHEBI:15378"/>
        <dbReference type="ChEBI" id="CHEBI:30616"/>
        <dbReference type="ChEBI" id="CHEBI:33019"/>
        <dbReference type="ChEBI" id="CHEBI:59967"/>
        <dbReference type="ChEBI" id="CHEBI:61593"/>
        <dbReference type="EC" id="2.7.7.70"/>
    </reaction>
</comment>
<comment type="pathway">
    <text evidence="1">Nucleotide-sugar biosynthesis; ADP-L-glycero-beta-D-manno-heptose biosynthesis; ADP-L-glycero-beta-D-manno-heptose from D-glycero-beta-D-manno-heptose 7-phosphate: step 1/4.</text>
</comment>
<comment type="pathway">
    <text evidence="1">Nucleotide-sugar biosynthesis; ADP-L-glycero-beta-D-manno-heptose biosynthesis; ADP-L-glycero-beta-D-manno-heptose from D-glycero-beta-D-manno-heptose 7-phosphate: step 3/4.</text>
</comment>
<comment type="subunit">
    <text evidence="1">Homodimer.</text>
</comment>
<comment type="similarity">
    <text evidence="1">In the N-terminal section; belongs to the carbohydrate kinase PfkB family.</text>
</comment>
<comment type="similarity">
    <text evidence="1">In the C-terminal section; belongs to the cytidylyltransferase family.</text>
</comment>
<gene>
    <name evidence="1" type="primary">hldE</name>
    <name type="ordered locus">Nwi_1071</name>
</gene>
<dbReference type="EC" id="2.7.1.167" evidence="1"/>
<dbReference type="EC" id="2.7.7.70" evidence="1"/>
<dbReference type="EMBL" id="CP000115">
    <property type="protein sequence ID" value="ABA04333.1"/>
    <property type="molecule type" value="Genomic_DNA"/>
</dbReference>
<dbReference type="RefSeq" id="WP_011314367.1">
    <property type="nucleotide sequence ID" value="NC_007406.1"/>
</dbReference>
<dbReference type="SMR" id="Q3STQ8"/>
<dbReference type="STRING" id="323098.Nwi_1071"/>
<dbReference type="KEGG" id="nwi:Nwi_1071"/>
<dbReference type="eggNOG" id="COG0615">
    <property type="taxonomic scope" value="Bacteria"/>
</dbReference>
<dbReference type="eggNOG" id="COG2870">
    <property type="taxonomic scope" value="Bacteria"/>
</dbReference>
<dbReference type="HOGENOM" id="CLU_021150_2_1_5"/>
<dbReference type="OrthoDB" id="9802794at2"/>
<dbReference type="UniPathway" id="UPA00356">
    <property type="reaction ID" value="UER00437"/>
</dbReference>
<dbReference type="UniPathway" id="UPA00356">
    <property type="reaction ID" value="UER00439"/>
</dbReference>
<dbReference type="Proteomes" id="UP000002531">
    <property type="component" value="Chromosome"/>
</dbReference>
<dbReference type="GO" id="GO:0005829">
    <property type="term" value="C:cytosol"/>
    <property type="evidence" value="ECO:0007669"/>
    <property type="project" value="TreeGrafter"/>
</dbReference>
<dbReference type="GO" id="GO:0005524">
    <property type="term" value="F:ATP binding"/>
    <property type="evidence" value="ECO:0007669"/>
    <property type="project" value="UniProtKB-UniRule"/>
</dbReference>
<dbReference type="GO" id="GO:0033785">
    <property type="term" value="F:heptose 7-phosphate kinase activity"/>
    <property type="evidence" value="ECO:0007669"/>
    <property type="project" value="UniProtKB-UniRule"/>
</dbReference>
<dbReference type="GO" id="GO:0033786">
    <property type="term" value="F:heptose-1-phosphate adenylyltransferase activity"/>
    <property type="evidence" value="ECO:0007669"/>
    <property type="project" value="UniProtKB-UniRule"/>
</dbReference>
<dbReference type="GO" id="GO:0016773">
    <property type="term" value="F:phosphotransferase activity, alcohol group as acceptor"/>
    <property type="evidence" value="ECO:0007669"/>
    <property type="project" value="InterPro"/>
</dbReference>
<dbReference type="GO" id="GO:0097171">
    <property type="term" value="P:ADP-L-glycero-beta-D-manno-heptose biosynthetic process"/>
    <property type="evidence" value="ECO:0007669"/>
    <property type="project" value="UniProtKB-UniPathway"/>
</dbReference>
<dbReference type="CDD" id="cd01172">
    <property type="entry name" value="RfaE_like"/>
    <property type="match status" value="1"/>
</dbReference>
<dbReference type="Gene3D" id="3.40.1190.20">
    <property type="match status" value="1"/>
</dbReference>
<dbReference type="Gene3D" id="3.40.50.620">
    <property type="entry name" value="HUPs"/>
    <property type="match status" value="1"/>
</dbReference>
<dbReference type="HAMAP" id="MF_01603">
    <property type="entry name" value="HldE"/>
    <property type="match status" value="1"/>
</dbReference>
<dbReference type="InterPro" id="IPR023030">
    <property type="entry name" value="Bifunc_HldE"/>
</dbReference>
<dbReference type="InterPro" id="IPR002173">
    <property type="entry name" value="Carboh/pur_kinase_PfkB_CS"/>
</dbReference>
<dbReference type="InterPro" id="IPR004821">
    <property type="entry name" value="Cyt_trans-like"/>
</dbReference>
<dbReference type="InterPro" id="IPR011611">
    <property type="entry name" value="PfkB_dom"/>
</dbReference>
<dbReference type="InterPro" id="IPR011913">
    <property type="entry name" value="RfaE_dom_I"/>
</dbReference>
<dbReference type="InterPro" id="IPR011914">
    <property type="entry name" value="RfaE_dom_II"/>
</dbReference>
<dbReference type="InterPro" id="IPR029056">
    <property type="entry name" value="Ribokinase-like"/>
</dbReference>
<dbReference type="InterPro" id="IPR014729">
    <property type="entry name" value="Rossmann-like_a/b/a_fold"/>
</dbReference>
<dbReference type="NCBIfam" id="TIGR00125">
    <property type="entry name" value="cyt_tran_rel"/>
    <property type="match status" value="1"/>
</dbReference>
<dbReference type="NCBIfam" id="TIGR02198">
    <property type="entry name" value="rfaE_dom_I"/>
    <property type="match status" value="1"/>
</dbReference>
<dbReference type="NCBIfam" id="TIGR02199">
    <property type="entry name" value="rfaE_dom_II"/>
    <property type="match status" value="1"/>
</dbReference>
<dbReference type="PANTHER" id="PTHR46969">
    <property type="entry name" value="BIFUNCTIONAL PROTEIN HLDE"/>
    <property type="match status" value="1"/>
</dbReference>
<dbReference type="PANTHER" id="PTHR46969:SF1">
    <property type="entry name" value="BIFUNCTIONAL PROTEIN HLDE"/>
    <property type="match status" value="1"/>
</dbReference>
<dbReference type="Pfam" id="PF01467">
    <property type="entry name" value="CTP_transf_like"/>
    <property type="match status" value="1"/>
</dbReference>
<dbReference type="Pfam" id="PF00294">
    <property type="entry name" value="PfkB"/>
    <property type="match status" value="1"/>
</dbReference>
<dbReference type="SUPFAM" id="SSF52374">
    <property type="entry name" value="Nucleotidylyl transferase"/>
    <property type="match status" value="1"/>
</dbReference>
<dbReference type="SUPFAM" id="SSF53613">
    <property type="entry name" value="Ribokinase-like"/>
    <property type="match status" value="1"/>
</dbReference>
<dbReference type="PROSITE" id="PS00583">
    <property type="entry name" value="PFKB_KINASES_1"/>
    <property type="match status" value="1"/>
</dbReference>
<sequence length="488" mass="51679">MIDFDGLSNAFSGQTVLCVGDLMLDEFVYGEISRISPEAPAPVIAVQRSETNVGGAGNVARNIAALGARCIFVGLAGEDDAGARLRDTLSRERLIEPLLISDPARSTTRKVRFVSEHFSTHMLRADWETLAPASGEVEQALIDAILPQLPCADIVLLSDYAKGVLTTRVIRSVIDGARRLGKRVIVDPKSADFGIYRGATLLTPNSKEFTDATGRRADDQASLAKAARDLMRIAECEALLVTQSERGMTLVPGEGEVIHVPAHTVKVRDVTGAGDTVVATLAVSLAAGADWEAALRTASAAAAVAVAKSGTAIVTLAELRRNILPPASLAAEEKIARSAGDLDQHLTAWREQGLRIGFTNGCFDILHPGHVKVLTGARAACDRLIVGLNSDASVKRLKGEGRPIQNERARAEVLAALEAVDLVAIFEEDTPLNLIGRIQPNVLVKGGDYSLEQVVGQELVTARGGEVILIDILQGFSTTSLVKRAGGA</sequence>
<accession>Q3STQ8</accession>
<protein>
    <recommendedName>
        <fullName evidence="1">Bifunctional protein HldE</fullName>
    </recommendedName>
    <domain>
        <recommendedName>
            <fullName evidence="1">D-beta-D-heptose 7-phosphate kinase</fullName>
            <ecNumber evidence="1">2.7.1.167</ecNumber>
        </recommendedName>
        <alternativeName>
            <fullName evidence="1">D-beta-D-heptose 7-phosphotransferase</fullName>
        </alternativeName>
        <alternativeName>
            <fullName evidence="1">D-glycero-beta-D-manno-heptose-7-phosphate kinase</fullName>
        </alternativeName>
    </domain>
    <domain>
        <recommendedName>
            <fullName evidence="1">D-beta-D-heptose 1-phosphate adenylyltransferase</fullName>
            <ecNumber evidence="1">2.7.7.70</ecNumber>
        </recommendedName>
        <alternativeName>
            <fullName evidence="1">D-glycero-beta-D-manno-heptose 1-phosphate adenylyltransferase</fullName>
        </alternativeName>
    </domain>
</protein>
<evidence type="ECO:0000255" key="1">
    <source>
        <dbReference type="HAMAP-Rule" id="MF_01603"/>
    </source>
</evidence>
<keyword id="KW-0067">ATP-binding</keyword>
<keyword id="KW-0119">Carbohydrate metabolism</keyword>
<keyword id="KW-0418">Kinase</keyword>
<keyword id="KW-0511">Multifunctional enzyme</keyword>
<keyword id="KW-0547">Nucleotide-binding</keyword>
<keyword id="KW-0548">Nucleotidyltransferase</keyword>
<keyword id="KW-1185">Reference proteome</keyword>
<keyword id="KW-0808">Transferase</keyword>
<proteinExistence type="inferred from homology"/>
<organism>
    <name type="scientific">Nitrobacter winogradskyi (strain ATCC 25391 / DSM 10237 / CIP 104748 / NCIMB 11846 / Nb-255)</name>
    <dbReference type="NCBI Taxonomy" id="323098"/>
    <lineage>
        <taxon>Bacteria</taxon>
        <taxon>Pseudomonadati</taxon>
        <taxon>Pseudomonadota</taxon>
        <taxon>Alphaproteobacteria</taxon>
        <taxon>Hyphomicrobiales</taxon>
        <taxon>Nitrobacteraceae</taxon>
        <taxon>Nitrobacter</taxon>
    </lineage>
</organism>
<name>HLDE_NITWN</name>